<name>DEFI_BOMPA</name>
<evidence type="ECO:0000255" key="1">
    <source>
        <dbReference type="PROSITE-ProRule" id="PRU00710"/>
    </source>
</evidence>
<evidence type="ECO:0000269" key="2">
    <source>
    </source>
</evidence>
<proteinExistence type="evidence at protein level"/>
<accession>P81462</accession>
<dbReference type="SMR" id="P81462"/>
<dbReference type="GO" id="GO:0005576">
    <property type="term" value="C:extracellular region"/>
    <property type="evidence" value="ECO:0007669"/>
    <property type="project" value="UniProtKB-SubCell"/>
</dbReference>
<dbReference type="GO" id="GO:0042742">
    <property type="term" value="P:defense response to bacterium"/>
    <property type="evidence" value="ECO:0007669"/>
    <property type="project" value="UniProtKB-KW"/>
</dbReference>
<dbReference type="GO" id="GO:0050832">
    <property type="term" value="P:defense response to fungus"/>
    <property type="evidence" value="ECO:0007669"/>
    <property type="project" value="UniProtKB-KW"/>
</dbReference>
<dbReference type="GO" id="GO:0045087">
    <property type="term" value="P:innate immune response"/>
    <property type="evidence" value="ECO:0007669"/>
    <property type="project" value="UniProtKB-KW"/>
</dbReference>
<dbReference type="GO" id="GO:0031640">
    <property type="term" value="P:killing of cells of another organism"/>
    <property type="evidence" value="ECO:0007669"/>
    <property type="project" value="UniProtKB-KW"/>
</dbReference>
<dbReference type="CDD" id="cd21806">
    <property type="entry name" value="DEFL_defensin-like"/>
    <property type="match status" value="1"/>
</dbReference>
<dbReference type="Gene3D" id="3.30.30.10">
    <property type="entry name" value="Knottin, scorpion toxin-like"/>
    <property type="match status" value="1"/>
</dbReference>
<dbReference type="InterPro" id="IPR017982">
    <property type="entry name" value="Defensin_insect"/>
</dbReference>
<dbReference type="InterPro" id="IPR001542">
    <property type="entry name" value="Defensin_invertebrate/fungal"/>
</dbReference>
<dbReference type="InterPro" id="IPR036574">
    <property type="entry name" value="Scorpion_toxin-like_sf"/>
</dbReference>
<dbReference type="Pfam" id="PF01097">
    <property type="entry name" value="Defensin_2"/>
    <property type="match status" value="1"/>
</dbReference>
<dbReference type="PRINTS" id="PR00271">
    <property type="entry name" value="DEFENSIN"/>
</dbReference>
<dbReference type="SUPFAM" id="SSF57095">
    <property type="entry name" value="Scorpion toxin-like"/>
    <property type="match status" value="1"/>
</dbReference>
<dbReference type="PROSITE" id="PS51378">
    <property type="entry name" value="INVERT_DEFENSINS"/>
    <property type="match status" value="1"/>
</dbReference>
<sequence>VTCDLLSIKGVAEHSACAANCLSMGKAGGRCENGICLCRKTTFKELWDKRF</sequence>
<protein>
    <recommendedName>
        <fullName>Defensin</fullName>
    </recommendedName>
</protein>
<reference key="1">
    <citation type="journal article" date="1997" name="Insect Biochem. Mol. Biol.">
        <title>Novel antibacterial peptides isolated from a European bumblebee, Bombus pascuorum (Hymenoptera, Apoidea).</title>
        <authorList>
            <person name="Rees J.A."/>
            <person name="Moniatte M."/>
            <person name="Bulet P."/>
        </authorList>
    </citation>
    <scope>PROTEIN SEQUENCE</scope>
    <scope>AMIDATION AT PHE-51</scope>
    <scope>MASS SPECTROMETRY</scope>
    <source>
        <tissue>Hemolymph</tissue>
    </source>
</reference>
<keyword id="KW-0027">Amidation</keyword>
<keyword id="KW-0044">Antibiotic</keyword>
<keyword id="KW-0929">Antimicrobial</keyword>
<keyword id="KW-0211">Defensin</keyword>
<keyword id="KW-0903">Direct protein sequencing</keyword>
<keyword id="KW-1015">Disulfide bond</keyword>
<keyword id="KW-0295">Fungicide</keyword>
<keyword id="KW-0391">Immunity</keyword>
<keyword id="KW-0399">Innate immunity</keyword>
<keyword id="KW-0964">Secreted</keyword>
<organism>
    <name type="scientific">Bombus pascuorum</name>
    <name type="common">Common carder bumblebee</name>
    <dbReference type="NCBI Taxonomy" id="65598"/>
    <lineage>
        <taxon>Eukaryota</taxon>
        <taxon>Metazoa</taxon>
        <taxon>Ecdysozoa</taxon>
        <taxon>Arthropoda</taxon>
        <taxon>Hexapoda</taxon>
        <taxon>Insecta</taxon>
        <taxon>Pterygota</taxon>
        <taxon>Neoptera</taxon>
        <taxon>Endopterygota</taxon>
        <taxon>Hymenoptera</taxon>
        <taxon>Apocrita</taxon>
        <taxon>Aculeata</taxon>
        <taxon>Apoidea</taxon>
        <taxon>Anthophila</taxon>
        <taxon>Apidae</taxon>
        <taxon>Bombus</taxon>
        <taxon>Thoracobombus</taxon>
    </lineage>
</organism>
<feature type="chain" id="PRO_0000074471" description="Defensin">
    <location>
        <begin position="1"/>
        <end position="51"/>
    </location>
</feature>
<feature type="modified residue" description="Phenylalanine amide" evidence="2">
    <location>
        <position position="51"/>
    </location>
</feature>
<feature type="disulfide bond" evidence="1">
    <location>
        <begin position="3"/>
        <end position="31"/>
    </location>
</feature>
<feature type="disulfide bond" evidence="1">
    <location>
        <begin position="17"/>
        <end position="36"/>
    </location>
</feature>
<feature type="disulfide bond" evidence="1">
    <location>
        <begin position="21"/>
        <end position="38"/>
    </location>
</feature>
<comment type="function">
    <text>Antibacterial peptide against Gram-positive and Gram-negative bacteria and fungi.</text>
</comment>
<comment type="subcellular location">
    <subcellularLocation>
        <location>Secreted</location>
    </subcellularLocation>
</comment>
<comment type="induction">
    <text>By bacterial infection.</text>
</comment>
<comment type="mass spectrometry"/>
<comment type="similarity">
    <text evidence="1">Belongs to the invertebrate defensin family. Type 1 subfamily.</text>
</comment>